<sequence length="154" mass="16688">MAARLCCQLDPARDVLCLRPVGAESRGRPLPGPLGALPPASPPIVPSDHGAHLSLRGLPVCAFSSAGPCALRFTSARRMETTVNAHWNLPKVLHKRTLGLSAMSTTDLEAYFKDCVFTEWEELGEEFRLKVFVLGGCRHKLVCSPAPCNFFTSA</sequence>
<gene>
    <name evidence="1" type="primary">X</name>
</gene>
<name>X_HBVB3</name>
<organism>
    <name type="scientific">Hepatitis B virus genotype B2 (isolate Vietnam/9873/1997)</name>
    <name type="common">HBV-B</name>
    <dbReference type="NCBI Taxonomy" id="489461"/>
    <lineage>
        <taxon>Viruses</taxon>
        <taxon>Riboviria</taxon>
        <taxon>Pararnavirae</taxon>
        <taxon>Artverviricota</taxon>
        <taxon>Revtraviricetes</taxon>
        <taxon>Blubervirales</taxon>
        <taxon>Hepadnaviridae</taxon>
        <taxon>Orthohepadnavirus</taxon>
        <taxon>Hepatitis B virus</taxon>
    </lineage>
</organism>
<feature type="chain" id="PRO_0000319899" description="Protein X">
    <location>
        <begin position="1"/>
        <end position="154"/>
    </location>
</feature>
<feature type="region of interest" description="Mitochondrial targeting sequence" evidence="1">
    <location>
        <begin position="68"/>
        <end position="117"/>
    </location>
</feature>
<accession>P0C685</accession>
<accession>Q9QAC0</accession>
<comment type="function">
    <text evidence="1">Multifunctional protein that plays a role in silencing host antiviral defenses and promoting viral transcription. Does not seem to be essential for HBV infection. May be directly involved in development of cirrhosis and liver cancer (hepatocellular carcinoma). Most of cytosolic activities involve modulation of cytosolic calcium. The effect on apoptosis is controversial depending on the cell types in which the studies have been conducted. May induce apoptosis by localizing in mitochondria and causing loss of mitochondrial membrane potential. May also modulate apoptosis by binding host CFLAR, a key regulator of the death-inducing signaling complex (DISC). Promotes viral transcription by using the host E3 ubiquitin ligase DDB1 to target the SMC5-SMC6 complex to proteasomal degradation. This host complex would otherwise bind to viral episomal DNA, and prevents its transcription. Moderately stimulates transcription of many different viral and cellular transcription elements. Promoters and enhancers stimulated by HBx contain DNA binding sites for NF-kappa-B, AP-1, AP-2, c-EBP, ATF/CREB, or the calcium-activated factor NF-AT.</text>
</comment>
<comment type="subunit">
    <text evidence="1">May form homodimer. May interact with host CEBPA, CFLAR, CREB1, DDB1, E4F1, HBXIP, HSPD1/HSP60, NFKBIA, POLR2E and SMAD4. Interacts with host SMC5-SMC6 complex and induces its degradation. Interacts with host TRPC4AP; leading to prevent ubiquitination of TRPC4AP. Interacts with host PLSCR1; this interaction promotes ubiquitination and degradation of HBx and impairs HBx-mediated cell proliferation.</text>
</comment>
<comment type="subcellular location">
    <subcellularLocation>
        <location evidence="1">Host cytoplasm</location>
    </subcellularLocation>
    <subcellularLocation>
        <location evidence="1">Host nucleus</location>
    </subcellularLocation>
    <subcellularLocation>
        <location evidence="1">Host mitochondrion</location>
    </subcellularLocation>
    <text evidence="1">Mainly cytoplasmic as only a fraction is detected in the nucleus. In cytoplasm, a minor fraction associates with mitochondria or proteasomes.</text>
</comment>
<comment type="PTM">
    <text evidence="1">A fraction may be phosphorylated in insect cells and HepG2 cells, a human hepatoblastoma cell line. Phosphorylated in vitro by host protein kinase C or mitogen-activated protein kinase. N-acetylated in insect cells.</text>
</comment>
<comment type="similarity">
    <text evidence="1">Belongs to the orthohepadnavirus protein X family.</text>
</comment>
<comment type="caution">
    <text>Transcriptional activities should be taken with a grain of salt. As of 2007, all studies demonstrating in vivo interaction between protein X and transcriptional components were performed with significant overexpression of both proteins and in the absence of viral infection.</text>
</comment>
<reference key="1">
    <citation type="journal article" date="2000" name="J. Gen. Virol.">
        <title>Long-term mutation rates in the hepatitis B virus genome.</title>
        <authorList>
            <person name="Hannoun C."/>
            <person name="Horal P."/>
            <person name="Lindh M."/>
        </authorList>
    </citation>
    <scope>NUCLEOTIDE SEQUENCE [GENOMIC DNA]</scope>
</reference>
<reference key="2">
    <citation type="journal article" date="2004" name="J. Virol.">
        <title>The enigmatic X gene of hepatitis B virus.</title>
        <authorList>
            <person name="Bouchard M.J."/>
            <person name="Schneider R.J."/>
        </authorList>
    </citation>
    <scope>REVIEW</scope>
</reference>
<reference key="3">
    <citation type="journal article" date="2006" name="Cancer Sci.">
        <title>Molecular functions and biological roles of hepatitis B virus x protein.</title>
        <authorList>
            <person name="Tang H."/>
            <person name="Oishi N."/>
            <person name="Kaneko S."/>
            <person name="Murakami S."/>
        </authorList>
    </citation>
    <scope>REVIEW</scope>
</reference>
<keyword id="KW-1074">Activation of host NF-kappa-B by virus</keyword>
<keyword id="KW-0010">Activator</keyword>
<keyword id="KW-0053">Apoptosis</keyword>
<keyword id="KW-1035">Host cytoplasm</keyword>
<keyword id="KW-1079">Host G2/M cell cycle arrest by virus</keyword>
<keyword id="KW-1045">Host mitochondrion</keyword>
<keyword id="KW-1048">Host nucleus</keyword>
<keyword id="KW-0945">Host-virus interaction</keyword>
<keyword id="KW-1121">Modulation of host cell cycle by virus</keyword>
<keyword id="KW-0804">Transcription</keyword>
<keyword id="KW-0805">Transcription regulation</keyword>
<protein>
    <recommendedName>
        <fullName evidence="1">Protein X</fullName>
    </recommendedName>
    <alternativeName>
        <fullName evidence="1">HBx</fullName>
    </alternativeName>
    <alternativeName>
        <fullName evidence="1">Peptide X</fullName>
    </alternativeName>
    <alternativeName>
        <fullName evidence="1">pX</fullName>
    </alternativeName>
</protein>
<dbReference type="EMBL" id="AF121251">
    <property type="protein sequence ID" value="AAF24739.1"/>
    <property type="molecule type" value="Genomic_DNA"/>
</dbReference>
<dbReference type="SMR" id="P0C685"/>
<dbReference type="Proteomes" id="UP000007915">
    <property type="component" value="Genome"/>
</dbReference>
<dbReference type="GO" id="GO:0033650">
    <property type="term" value="C:host cell mitochondrion"/>
    <property type="evidence" value="ECO:0007669"/>
    <property type="project" value="UniProtKB-SubCell"/>
</dbReference>
<dbReference type="GO" id="GO:0042025">
    <property type="term" value="C:host cell nucleus"/>
    <property type="evidence" value="ECO:0007669"/>
    <property type="project" value="UniProtKB-SubCell"/>
</dbReference>
<dbReference type="GO" id="GO:0006351">
    <property type="term" value="P:DNA-templated transcription"/>
    <property type="evidence" value="ECO:0007669"/>
    <property type="project" value="UniProtKB-UniRule"/>
</dbReference>
<dbReference type="GO" id="GO:0085033">
    <property type="term" value="P:symbiont-mediated activation of host NF-kappaB cascade"/>
    <property type="evidence" value="ECO:0007669"/>
    <property type="project" value="UniProtKB-UniRule"/>
</dbReference>
<dbReference type="GO" id="GO:0039592">
    <property type="term" value="P:symbiont-mediated arrest of host cell cycle during G2/M transition"/>
    <property type="evidence" value="ECO:0007669"/>
    <property type="project" value="UniProtKB-UniRule"/>
</dbReference>
<dbReference type="GO" id="GO:0019079">
    <property type="term" value="P:viral genome replication"/>
    <property type="evidence" value="ECO:0007669"/>
    <property type="project" value="UniProtKB-UniRule"/>
</dbReference>
<dbReference type="HAMAP" id="MF_04074">
    <property type="entry name" value="HBV_X"/>
    <property type="match status" value="1"/>
</dbReference>
<dbReference type="InterPro" id="IPR000236">
    <property type="entry name" value="Transactivation_prot_X"/>
</dbReference>
<dbReference type="Pfam" id="PF00739">
    <property type="entry name" value="X"/>
    <property type="match status" value="1"/>
</dbReference>
<evidence type="ECO:0000255" key="1">
    <source>
        <dbReference type="HAMAP-Rule" id="MF_04074"/>
    </source>
</evidence>
<proteinExistence type="inferred from homology"/>
<organismHost>
    <name type="scientific">Homo sapiens</name>
    <name type="common">Human</name>
    <dbReference type="NCBI Taxonomy" id="9606"/>
</organismHost>
<organismHost>
    <name type="scientific">Pan troglodytes</name>
    <name type="common">Chimpanzee</name>
    <dbReference type="NCBI Taxonomy" id="9598"/>
</organismHost>